<evidence type="ECO:0000255" key="1">
    <source>
        <dbReference type="HAMAP-Rule" id="MF_01363"/>
    </source>
</evidence>
<evidence type="ECO:0000305" key="2"/>
<reference key="1">
    <citation type="journal article" date="2009" name="Appl. Environ. Microbiol.">
        <title>Three genomes from the phylum Acidobacteria provide insight into the lifestyles of these microorganisms in soils.</title>
        <authorList>
            <person name="Ward N.L."/>
            <person name="Challacombe J.F."/>
            <person name="Janssen P.H."/>
            <person name="Henrissat B."/>
            <person name="Coutinho P.M."/>
            <person name="Wu M."/>
            <person name="Xie G."/>
            <person name="Haft D.H."/>
            <person name="Sait M."/>
            <person name="Badger J."/>
            <person name="Barabote R.D."/>
            <person name="Bradley B."/>
            <person name="Brettin T.S."/>
            <person name="Brinkac L.M."/>
            <person name="Bruce D."/>
            <person name="Creasy T."/>
            <person name="Daugherty S.C."/>
            <person name="Davidsen T.M."/>
            <person name="DeBoy R.T."/>
            <person name="Detter J.C."/>
            <person name="Dodson R.J."/>
            <person name="Durkin A.S."/>
            <person name="Ganapathy A."/>
            <person name="Gwinn-Giglio M."/>
            <person name="Han C.S."/>
            <person name="Khouri H."/>
            <person name="Kiss H."/>
            <person name="Kothari S.P."/>
            <person name="Madupu R."/>
            <person name="Nelson K.E."/>
            <person name="Nelson W.C."/>
            <person name="Paulsen I."/>
            <person name="Penn K."/>
            <person name="Ren Q."/>
            <person name="Rosovitz M.J."/>
            <person name="Selengut J.D."/>
            <person name="Shrivastava S."/>
            <person name="Sullivan S.A."/>
            <person name="Tapia R."/>
            <person name="Thompson L.S."/>
            <person name="Watkins K.L."/>
            <person name="Yang Q."/>
            <person name="Yu C."/>
            <person name="Zafar N."/>
            <person name="Zhou L."/>
            <person name="Kuske C.R."/>
        </authorList>
    </citation>
    <scope>NUCLEOTIDE SEQUENCE [LARGE SCALE GENOMIC DNA]</scope>
    <source>
        <strain>ATCC 51196 / DSM 11244 / BCRC 80197 / JCM 7670 / NBRC 15755 / NCIMB 13165 / 161</strain>
    </source>
</reference>
<proteinExistence type="inferred from homology"/>
<accession>C1F355</accession>
<gene>
    <name evidence="1" type="primary">rplU</name>
    <name type="ordered locus">ACP_2747</name>
</gene>
<keyword id="KW-1185">Reference proteome</keyword>
<keyword id="KW-0687">Ribonucleoprotein</keyword>
<keyword id="KW-0689">Ribosomal protein</keyword>
<keyword id="KW-0694">RNA-binding</keyword>
<keyword id="KW-0699">rRNA-binding</keyword>
<feature type="chain" id="PRO_1000166694" description="Large ribosomal subunit protein bL21">
    <location>
        <begin position="1"/>
        <end position="108"/>
    </location>
</feature>
<comment type="function">
    <text evidence="1">This protein binds to 23S rRNA in the presence of protein L20.</text>
</comment>
<comment type="subunit">
    <text evidence="1">Part of the 50S ribosomal subunit. Contacts protein L20.</text>
</comment>
<comment type="similarity">
    <text evidence="1">Belongs to the bacterial ribosomal protein bL21 family.</text>
</comment>
<organism>
    <name type="scientific">Acidobacterium capsulatum (strain ATCC 51196 / DSM 11244 / BCRC 80197 / JCM 7670 / NBRC 15755 / NCIMB 13165 / 161)</name>
    <dbReference type="NCBI Taxonomy" id="240015"/>
    <lineage>
        <taxon>Bacteria</taxon>
        <taxon>Pseudomonadati</taxon>
        <taxon>Acidobacteriota</taxon>
        <taxon>Terriglobia</taxon>
        <taxon>Terriglobales</taxon>
        <taxon>Acidobacteriaceae</taxon>
        <taxon>Acidobacterium</taxon>
    </lineage>
</organism>
<protein>
    <recommendedName>
        <fullName evidence="1">Large ribosomal subunit protein bL21</fullName>
    </recommendedName>
    <alternativeName>
        <fullName evidence="2">50S ribosomal protein L21</fullName>
    </alternativeName>
</protein>
<dbReference type="EMBL" id="CP001472">
    <property type="protein sequence ID" value="ACO33288.1"/>
    <property type="molecule type" value="Genomic_DNA"/>
</dbReference>
<dbReference type="RefSeq" id="WP_015897810.1">
    <property type="nucleotide sequence ID" value="NC_012483.1"/>
</dbReference>
<dbReference type="SMR" id="C1F355"/>
<dbReference type="FunCoup" id="C1F355">
    <property type="interactions" value="604"/>
</dbReference>
<dbReference type="STRING" id="240015.ACP_2747"/>
<dbReference type="KEGG" id="aca:ACP_2747"/>
<dbReference type="eggNOG" id="COG0261">
    <property type="taxonomic scope" value="Bacteria"/>
</dbReference>
<dbReference type="HOGENOM" id="CLU_061463_3_0_0"/>
<dbReference type="InParanoid" id="C1F355"/>
<dbReference type="OrthoDB" id="9813334at2"/>
<dbReference type="Proteomes" id="UP000002207">
    <property type="component" value="Chromosome"/>
</dbReference>
<dbReference type="GO" id="GO:0005737">
    <property type="term" value="C:cytoplasm"/>
    <property type="evidence" value="ECO:0007669"/>
    <property type="project" value="UniProtKB-ARBA"/>
</dbReference>
<dbReference type="GO" id="GO:1990904">
    <property type="term" value="C:ribonucleoprotein complex"/>
    <property type="evidence" value="ECO:0007669"/>
    <property type="project" value="UniProtKB-KW"/>
</dbReference>
<dbReference type="GO" id="GO:0005840">
    <property type="term" value="C:ribosome"/>
    <property type="evidence" value="ECO:0007669"/>
    <property type="project" value="UniProtKB-KW"/>
</dbReference>
<dbReference type="GO" id="GO:0019843">
    <property type="term" value="F:rRNA binding"/>
    <property type="evidence" value="ECO:0007669"/>
    <property type="project" value="UniProtKB-UniRule"/>
</dbReference>
<dbReference type="GO" id="GO:0003735">
    <property type="term" value="F:structural constituent of ribosome"/>
    <property type="evidence" value="ECO:0007669"/>
    <property type="project" value="InterPro"/>
</dbReference>
<dbReference type="GO" id="GO:0006412">
    <property type="term" value="P:translation"/>
    <property type="evidence" value="ECO:0007669"/>
    <property type="project" value="UniProtKB-UniRule"/>
</dbReference>
<dbReference type="HAMAP" id="MF_01363">
    <property type="entry name" value="Ribosomal_bL21"/>
    <property type="match status" value="1"/>
</dbReference>
<dbReference type="InterPro" id="IPR028909">
    <property type="entry name" value="bL21-like"/>
</dbReference>
<dbReference type="InterPro" id="IPR036164">
    <property type="entry name" value="bL21-like_sf"/>
</dbReference>
<dbReference type="InterPro" id="IPR001787">
    <property type="entry name" value="Ribosomal_bL21"/>
</dbReference>
<dbReference type="NCBIfam" id="TIGR00061">
    <property type="entry name" value="L21"/>
    <property type="match status" value="1"/>
</dbReference>
<dbReference type="PANTHER" id="PTHR21349">
    <property type="entry name" value="50S RIBOSOMAL PROTEIN L21"/>
    <property type="match status" value="1"/>
</dbReference>
<dbReference type="PANTHER" id="PTHR21349:SF0">
    <property type="entry name" value="LARGE RIBOSOMAL SUBUNIT PROTEIN BL21M"/>
    <property type="match status" value="1"/>
</dbReference>
<dbReference type="Pfam" id="PF00829">
    <property type="entry name" value="Ribosomal_L21p"/>
    <property type="match status" value="1"/>
</dbReference>
<dbReference type="SUPFAM" id="SSF141091">
    <property type="entry name" value="L21p-like"/>
    <property type="match status" value="1"/>
</dbReference>
<sequence>MYAVIRTGGKQYRVAPGDVLKIETAAANQDGQIEFSEVLAFSGETGSVVKPGAAKVLASVEGEGRGDKILVFHYKRKKQYKKLQGHRQNFTQIRIQEIQIDGNSYRAQ</sequence>
<name>RL21_ACIC5</name>